<accession>Q17QT4</accession>
<evidence type="ECO:0000250" key="1"/>
<evidence type="ECO:0000250" key="2">
    <source>
        <dbReference type="UniProtKB" id="Q9UJJ7"/>
    </source>
</evidence>
<evidence type="ECO:0000256" key="3">
    <source>
        <dbReference type="SAM" id="MobiDB-lite"/>
    </source>
</evidence>
<evidence type="ECO:0000305" key="4"/>
<dbReference type="EMBL" id="BC118196">
    <property type="protein sequence ID" value="AAI18197.1"/>
    <property type="molecule type" value="mRNA"/>
</dbReference>
<dbReference type="RefSeq" id="NP_001069342.1">
    <property type="nucleotide sequence ID" value="NM_001075874.1"/>
</dbReference>
<dbReference type="RefSeq" id="XP_010817400.1">
    <property type="nucleotide sequence ID" value="XM_010819098.2"/>
</dbReference>
<dbReference type="SMR" id="Q17QT4"/>
<dbReference type="FunCoup" id="Q17QT4">
    <property type="interactions" value="715"/>
</dbReference>
<dbReference type="STRING" id="9913.ENSBTAP00000067589"/>
<dbReference type="PaxDb" id="9913-ENSBTAP00000000204"/>
<dbReference type="GeneID" id="525521"/>
<dbReference type="KEGG" id="bta:525521"/>
<dbReference type="CTD" id="113000"/>
<dbReference type="VEuPathDB" id="HostDB:ENSBTAG00000000179"/>
<dbReference type="eggNOG" id="KOG1919">
    <property type="taxonomic scope" value="Eukaryota"/>
</dbReference>
<dbReference type="HOGENOM" id="CLU_016902_10_0_1"/>
<dbReference type="InParanoid" id="Q17QT4"/>
<dbReference type="OMA" id="FGTSGIM"/>
<dbReference type="OrthoDB" id="418349at2759"/>
<dbReference type="TreeFam" id="TF324755"/>
<dbReference type="Proteomes" id="UP000009136">
    <property type="component" value="Chromosome 25"/>
</dbReference>
<dbReference type="Bgee" id="ENSBTAG00000000179">
    <property type="expression patterns" value="Expressed in parenchyma of mammary gland and 104 other cell types or tissues"/>
</dbReference>
<dbReference type="GO" id="GO:0009982">
    <property type="term" value="F:pseudouridine synthase activity"/>
    <property type="evidence" value="ECO:0000318"/>
    <property type="project" value="GO_Central"/>
</dbReference>
<dbReference type="GO" id="GO:0003723">
    <property type="term" value="F:RNA binding"/>
    <property type="evidence" value="ECO:0007669"/>
    <property type="project" value="InterPro"/>
</dbReference>
<dbReference type="GO" id="GO:0000455">
    <property type="term" value="P:enzyme-directed rRNA pseudouridine synthesis"/>
    <property type="evidence" value="ECO:0000318"/>
    <property type="project" value="GO_Central"/>
</dbReference>
<dbReference type="CDD" id="cd02869">
    <property type="entry name" value="PseudoU_synth_RluA_like"/>
    <property type="match status" value="1"/>
</dbReference>
<dbReference type="Gene3D" id="3.30.2350.10">
    <property type="entry name" value="Pseudouridine synthase"/>
    <property type="match status" value="1"/>
</dbReference>
<dbReference type="InterPro" id="IPR020103">
    <property type="entry name" value="PsdUridine_synth_cat_dom_sf"/>
</dbReference>
<dbReference type="InterPro" id="IPR006145">
    <property type="entry name" value="PsdUridine_synth_RsuA/RluA"/>
</dbReference>
<dbReference type="InterPro" id="IPR050188">
    <property type="entry name" value="RluA_PseudoU_synthase"/>
</dbReference>
<dbReference type="PANTHER" id="PTHR21600">
    <property type="entry name" value="MITOCHONDRIAL RNA PSEUDOURIDINE SYNTHASE"/>
    <property type="match status" value="1"/>
</dbReference>
<dbReference type="PANTHER" id="PTHR21600:SF87">
    <property type="entry name" value="RNA PSEUDOURIDYLATE SYNTHASE DOMAIN-CONTAINING PROTEIN 1"/>
    <property type="match status" value="1"/>
</dbReference>
<dbReference type="Pfam" id="PF00849">
    <property type="entry name" value="PseudoU_synth_2"/>
    <property type="match status" value="1"/>
</dbReference>
<dbReference type="SUPFAM" id="SSF55120">
    <property type="entry name" value="Pseudouridine synthase"/>
    <property type="match status" value="1"/>
</dbReference>
<name>RUSD1_BOVIN</name>
<reference key="1">
    <citation type="submission" date="2006-06" db="EMBL/GenBank/DDBJ databases">
        <authorList>
            <consortium name="NIH - Mammalian Gene Collection (MGC) project"/>
        </authorList>
    </citation>
    <scope>NUCLEOTIDE SEQUENCE [LARGE SCALE MRNA]</scope>
    <source>
        <strain>Hereford</strain>
        <tissue>Hippocampus</tissue>
    </source>
</reference>
<feature type="chain" id="PRO_0000300815" description="RNA pseudouridylate synthase domain-containing protein 1">
    <location>
        <begin position="1"/>
        <end position="308"/>
    </location>
</feature>
<feature type="region of interest" description="Disordered" evidence="3">
    <location>
        <begin position="257"/>
        <end position="292"/>
    </location>
</feature>
<feature type="compositionally biased region" description="Pro residues" evidence="3">
    <location>
        <begin position="269"/>
        <end position="287"/>
    </location>
</feature>
<feature type="active site" evidence="1">
    <location>
        <position position="67"/>
    </location>
</feature>
<feature type="modified residue" description="N-acetylmethionine" evidence="2">
    <location>
        <position position="1"/>
    </location>
</feature>
<comment type="similarity">
    <text evidence="4">Belongs to the pseudouridine synthase RluA family.</text>
</comment>
<protein>
    <recommendedName>
        <fullName>RNA pseudouridylate synthase domain-containing protein 1</fullName>
    </recommendedName>
</protein>
<organism>
    <name type="scientific">Bos taurus</name>
    <name type="common">Bovine</name>
    <dbReference type="NCBI Taxonomy" id="9913"/>
    <lineage>
        <taxon>Eukaryota</taxon>
        <taxon>Metazoa</taxon>
        <taxon>Chordata</taxon>
        <taxon>Craniata</taxon>
        <taxon>Vertebrata</taxon>
        <taxon>Euteleostomi</taxon>
        <taxon>Mammalia</taxon>
        <taxon>Eutheria</taxon>
        <taxon>Laurasiatheria</taxon>
        <taxon>Artiodactyla</taxon>
        <taxon>Ruminantia</taxon>
        <taxon>Pecora</taxon>
        <taxon>Bovidae</taxon>
        <taxon>Bovinae</taxon>
        <taxon>Bos</taxon>
    </lineage>
</organism>
<proteinExistence type="evidence at transcript level"/>
<sequence length="308" mass="34177">MEPGSVENLCVVYRSHDFLVVNKHWDVRIDSKAWRETLTLQKQLRHRFPELADPDTYYGFRFCHQLDFSTSGALCVALNKAAAGSAYRCFKDRRVTKAYLALVRGHVQESRMTISYAIGKNSTEGRTHTMCIEGTQGCENPKPSLTELVVLEHGLYAGDPVSKVLLQPLTGRTHQLRVHCSALGHPIVGDLTYGHALGQEDQPFRMMLHAFYLRIPTSAECVEACTPDPFVPSLDACWSPHTLLQPLDELVQVLRAAPDPDPSEGGPGPCSPCTPLPGPGRPPPPPETEVQRASCLQWLSEWTLEPDN</sequence>
<gene>
    <name type="primary">RPUSD1</name>
</gene>
<keyword id="KW-0007">Acetylation</keyword>
<keyword id="KW-1185">Reference proteome</keyword>